<organism>
    <name type="scientific">Austrelaps superbus</name>
    <name type="common">Lowland copperhead snake</name>
    <name type="synonym">Hoplocephalus superbus</name>
    <dbReference type="NCBI Taxonomy" id="29156"/>
    <lineage>
        <taxon>Eukaryota</taxon>
        <taxon>Metazoa</taxon>
        <taxon>Chordata</taxon>
        <taxon>Craniata</taxon>
        <taxon>Vertebrata</taxon>
        <taxon>Euteleostomi</taxon>
        <taxon>Lepidosauria</taxon>
        <taxon>Squamata</taxon>
        <taxon>Bifurcata</taxon>
        <taxon>Unidentata</taxon>
        <taxon>Episquamata</taxon>
        <taxon>Toxicofera</taxon>
        <taxon>Serpentes</taxon>
        <taxon>Colubroidea</taxon>
        <taxon>Elapidae</taxon>
        <taxon>Hydrophiinae</taxon>
        <taxon>Austrelaps</taxon>
    </lineage>
</organism>
<dbReference type="EMBL" id="EU401815">
    <property type="protein sequence ID" value="ACC77764.1"/>
    <property type="molecule type" value="Genomic_DNA"/>
</dbReference>
<dbReference type="SMR" id="B5L5M7"/>
<dbReference type="MEROPS" id="I02.062"/>
<dbReference type="GO" id="GO:0005615">
    <property type="term" value="C:extracellular space"/>
    <property type="evidence" value="ECO:0007669"/>
    <property type="project" value="TreeGrafter"/>
</dbReference>
<dbReference type="GO" id="GO:0004867">
    <property type="term" value="F:serine-type endopeptidase inhibitor activity"/>
    <property type="evidence" value="ECO:0007669"/>
    <property type="project" value="UniProtKB-KW"/>
</dbReference>
<dbReference type="CDD" id="cd22608">
    <property type="entry name" value="Kunitz_PPTI-like"/>
    <property type="match status" value="1"/>
</dbReference>
<dbReference type="FunFam" id="4.10.410.10:FF:000004">
    <property type="entry name" value="Tissue factor pathway inhibitor"/>
    <property type="match status" value="1"/>
</dbReference>
<dbReference type="Gene3D" id="4.10.410.10">
    <property type="entry name" value="Pancreatic trypsin inhibitor Kunitz domain"/>
    <property type="match status" value="1"/>
</dbReference>
<dbReference type="InterPro" id="IPR002223">
    <property type="entry name" value="Kunitz_BPTI"/>
</dbReference>
<dbReference type="InterPro" id="IPR036880">
    <property type="entry name" value="Kunitz_BPTI_sf"/>
</dbReference>
<dbReference type="InterPro" id="IPR020901">
    <property type="entry name" value="Prtase_inh_Kunz-CS"/>
</dbReference>
<dbReference type="InterPro" id="IPR050098">
    <property type="entry name" value="TFPI/VKTCI-like"/>
</dbReference>
<dbReference type="PANTHER" id="PTHR10083:SF383">
    <property type="entry name" value="BPTI_KUNITZ INHIBITOR DOMAIN-CONTAINING PROTEIN"/>
    <property type="match status" value="1"/>
</dbReference>
<dbReference type="PANTHER" id="PTHR10083">
    <property type="entry name" value="KUNITZ-TYPE PROTEASE INHIBITOR-RELATED"/>
    <property type="match status" value="1"/>
</dbReference>
<dbReference type="Pfam" id="PF00014">
    <property type="entry name" value="Kunitz_BPTI"/>
    <property type="match status" value="1"/>
</dbReference>
<dbReference type="PRINTS" id="PR00759">
    <property type="entry name" value="BASICPTASE"/>
</dbReference>
<dbReference type="SMART" id="SM00131">
    <property type="entry name" value="KU"/>
    <property type="match status" value="1"/>
</dbReference>
<dbReference type="SUPFAM" id="SSF57362">
    <property type="entry name" value="BPTI-like"/>
    <property type="match status" value="1"/>
</dbReference>
<dbReference type="PROSITE" id="PS00280">
    <property type="entry name" value="BPTI_KUNITZ_1"/>
    <property type="match status" value="1"/>
</dbReference>
<dbReference type="PROSITE" id="PS50279">
    <property type="entry name" value="BPTI_KUNITZ_2"/>
    <property type="match status" value="1"/>
</dbReference>
<reference key="1">
    <citation type="journal article" date="2008" name="Cell. Mol. Life Sci.">
        <title>Common evolution of waprin and Kunitz-like toxin families in Australian venomous snakes.</title>
        <authorList>
            <person name="St Pierre L."/>
            <person name="Earl S.T."/>
            <person name="Filippovich I."/>
            <person name="Sorokina N."/>
            <person name="Masci P.P."/>
            <person name="De Jersey J."/>
            <person name="Lavin M.F."/>
        </authorList>
    </citation>
    <scope>NUCLEOTIDE SEQUENCE [GENOMIC DNA]</scope>
    <source>
        <tissue>Venom gland</tissue>
    </source>
</reference>
<evidence type="ECO:0000250" key="1"/>
<evidence type="ECO:0000255" key="2"/>
<evidence type="ECO:0000255" key="3">
    <source>
        <dbReference type="PROSITE-ProRule" id="PRU00031"/>
    </source>
</evidence>
<evidence type="ECO:0000305" key="4"/>
<sequence>MSSGGLLLLLGLLTLWAELTPVSGQDRPKFCHLPANPGPCRATITRFYYNSDSKQCEKFTYGGCHGNENNFETKDKCHYTCVGK</sequence>
<proteinExistence type="inferred from homology"/>
<protein>
    <recommendedName>
        <fullName>Kunitz/BPTI-like toxin</fullName>
    </recommendedName>
</protein>
<keyword id="KW-1015">Disulfide bond</keyword>
<keyword id="KW-0646">Protease inhibitor</keyword>
<keyword id="KW-0873">Pyrrolidone carboxylic acid</keyword>
<keyword id="KW-0964">Secreted</keyword>
<keyword id="KW-0722">Serine protease inhibitor</keyword>
<keyword id="KW-0732">Signal</keyword>
<comment type="function">
    <text evidence="4">Serine protease inhibitor.</text>
</comment>
<comment type="subcellular location">
    <subcellularLocation>
        <location evidence="1">Secreted</location>
    </subcellularLocation>
</comment>
<name>IVBI_AUSSU</name>
<accession>B5L5M7</accession>
<feature type="signal peptide" evidence="2">
    <location>
        <begin position="1"/>
        <end position="24"/>
    </location>
</feature>
<feature type="chain" id="PRO_5000395615" description="Kunitz/BPTI-like toxin">
    <location>
        <begin position="25"/>
        <end position="84"/>
    </location>
</feature>
<feature type="domain" description="BPTI/Kunitz inhibitor" evidence="3">
    <location>
        <begin position="31"/>
        <end position="81"/>
    </location>
</feature>
<feature type="site" description="Reactive bond for trypsin" evidence="1">
    <location>
        <begin position="41"/>
        <end position="42"/>
    </location>
</feature>
<feature type="modified residue" description="Pyrrolidone carboxylic acid" evidence="1">
    <location>
        <position position="25"/>
    </location>
</feature>
<feature type="disulfide bond" evidence="3">
    <location>
        <begin position="31"/>
        <end position="81"/>
    </location>
</feature>
<feature type="disulfide bond" evidence="3">
    <location>
        <begin position="40"/>
        <end position="64"/>
    </location>
</feature>
<feature type="disulfide bond" evidence="3">
    <location>
        <begin position="56"/>
        <end position="77"/>
    </location>
</feature>